<name>Y1777_THEGJ</name>
<organism>
    <name type="scientific">Thermococcus gammatolerans (strain DSM 15229 / JCM 11827 / EJ3)</name>
    <dbReference type="NCBI Taxonomy" id="593117"/>
    <lineage>
        <taxon>Archaea</taxon>
        <taxon>Methanobacteriati</taxon>
        <taxon>Methanobacteriota</taxon>
        <taxon>Thermococci</taxon>
        <taxon>Thermococcales</taxon>
        <taxon>Thermococcaceae</taxon>
        <taxon>Thermococcus</taxon>
    </lineage>
</organism>
<feature type="chain" id="PRO_1000213541" description="UPF0292 protein TGAM_1777">
    <location>
        <begin position="1"/>
        <end position="133"/>
    </location>
</feature>
<feature type="domain" description="Toprim" evidence="1">
    <location>
        <begin position="20"/>
        <end position="100"/>
    </location>
</feature>
<feature type="binding site" evidence="1">
    <location>
        <position position="26"/>
    </location>
    <ligand>
        <name>Mg(2+)</name>
        <dbReference type="ChEBI" id="CHEBI:18420"/>
        <label>1</label>
        <note>catalytic</note>
    </ligand>
</feature>
<feature type="binding site" evidence="1">
    <location>
        <position position="69"/>
    </location>
    <ligand>
        <name>Mg(2+)</name>
        <dbReference type="ChEBI" id="CHEBI:18420"/>
        <label>1</label>
        <note>catalytic</note>
    </ligand>
</feature>
<feature type="binding site" evidence="1">
    <location>
        <position position="69"/>
    </location>
    <ligand>
        <name>Mg(2+)</name>
        <dbReference type="ChEBI" id="CHEBI:18420"/>
        <label>2</label>
    </ligand>
</feature>
<feature type="binding site" evidence="1">
    <location>
        <position position="71"/>
    </location>
    <ligand>
        <name>Mg(2+)</name>
        <dbReference type="ChEBI" id="CHEBI:18420"/>
        <label>2</label>
    </ligand>
</feature>
<proteinExistence type="inferred from homology"/>
<dbReference type="EMBL" id="CP001398">
    <property type="protein sequence ID" value="ACS34279.1"/>
    <property type="molecule type" value="Genomic_DNA"/>
</dbReference>
<dbReference type="RefSeq" id="WP_015859388.1">
    <property type="nucleotide sequence ID" value="NC_012804.1"/>
</dbReference>
<dbReference type="SMR" id="C5A1L0"/>
<dbReference type="STRING" id="593117.TGAM_1777"/>
<dbReference type="PaxDb" id="593117-TGAM_1777"/>
<dbReference type="GeneID" id="7987496"/>
<dbReference type="KEGG" id="tga:TGAM_1777"/>
<dbReference type="PATRIC" id="fig|593117.10.peg.1785"/>
<dbReference type="eggNOG" id="arCOG01486">
    <property type="taxonomic scope" value="Archaea"/>
</dbReference>
<dbReference type="HOGENOM" id="CLU_140789_3_0_2"/>
<dbReference type="OrthoDB" id="56459at2157"/>
<dbReference type="Proteomes" id="UP000001488">
    <property type="component" value="Chromosome"/>
</dbReference>
<dbReference type="GO" id="GO:0046872">
    <property type="term" value="F:metal ion binding"/>
    <property type="evidence" value="ECO:0007669"/>
    <property type="project" value="UniProtKB-KW"/>
</dbReference>
<dbReference type="CDD" id="cd01027">
    <property type="entry name" value="TOPRIM_RNase_M5_like"/>
    <property type="match status" value="1"/>
</dbReference>
<dbReference type="Gene3D" id="3.40.1360.10">
    <property type="match status" value="1"/>
</dbReference>
<dbReference type="HAMAP" id="MF_01095">
    <property type="entry name" value="UPF0292"/>
    <property type="match status" value="1"/>
</dbReference>
<dbReference type="InterPro" id="IPR006171">
    <property type="entry name" value="TOPRIM_dom"/>
</dbReference>
<dbReference type="InterPro" id="IPR034141">
    <property type="entry name" value="TOPRIM_RNase_M5-like"/>
</dbReference>
<dbReference type="InterPro" id="IPR022972">
    <property type="entry name" value="UPF0292"/>
</dbReference>
<dbReference type="NCBIfam" id="NF003090">
    <property type="entry name" value="PRK04017.1-1"/>
    <property type="match status" value="1"/>
</dbReference>
<dbReference type="PANTHER" id="PTHR39964:SF2">
    <property type="entry name" value="UPF0292 PROTEIN MJ1624"/>
    <property type="match status" value="1"/>
</dbReference>
<dbReference type="PANTHER" id="PTHR39964">
    <property type="entry name" value="UPF0292 PROTEIN TK1411"/>
    <property type="match status" value="1"/>
</dbReference>
<dbReference type="Pfam" id="PF01751">
    <property type="entry name" value="Toprim"/>
    <property type="match status" value="1"/>
</dbReference>
<dbReference type="SMART" id="SM00493">
    <property type="entry name" value="TOPRIM"/>
    <property type="match status" value="1"/>
</dbReference>
<dbReference type="SUPFAM" id="SSF110455">
    <property type="entry name" value="Toprim domain"/>
    <property type="match status" value="1"/>
</dbReference>
<dbReference type="PROSITE" id="PS50880">
    <property type="entry name" value="TOPRIM"/>
    <property type="match status" value="1"/>
</dbReference>
<accession>C5A1L0</accession>
<reference key="1">
    <citation type="journal article" date="2007" name="Genome Biol.">
        <title>Genome analysis and genome-wide proteomics of Thermococcus gammatolerans, the most radioresistant organism known amongst the Archaea.</title>
        <authorList>
            <person name="Zivanovic Y."/>
            <person name="Armengaud J."/>
            <person name="Lagorce A."/>
            <person name="Leplat C."/>
            <person name="Guerin P."/>
            <person name="Dutertre M."/>
            <person name="Anthouard V."/>
            <person name="Forterre P."/>
            <person name="Wincker P."/>
            <person name="Confalonieri F."/>
        </authorList>
    </citation>
    <scope>NUCLEOTIDE SEQUENCE [LARGE SCALE GENOMIC DNA]</scope>
    <source>
        <strain>DSM 15229 / JCM 11827 / EJ3</strain>
    </source>
</reference>
<sequence>MYAENYKRFLELIEKLREFEGALIVEGLRDEVALRNLGVRAEIIRLSRLPLAEIALIASRYREVMILTDFDRKGEELAKKLVSYLEGYPCRVDVETRRELKRIAKKDIKGVEELYGLYMKVVSVSDPQLEGFQ</sequence>
<comment type="cofactor">
    <cofactor evidence="1">
        <name>Mg(2+)</name>
        <dbReference type="ChEBI" id="CHEBI:18420"/>
    </cofactor>
    <text evidence="1">Binds two Mg(2+) per subunit.</text>
</comment>
<comment type="similarity">
    <text evidence="1">Belongs to the UPF0292 family.</text>
</comment>
<protein>
    <recommendedName>
        <fullName evidence="1">UPF0292 protein TGAM_1777</fullName>
    </recommendedName>
</protein>
<keyword id="KW-0460">Magnesium</keyword>
<keyword id="KW-0479">Metal-binding</keyword>
<keyword id="KW-1185">Reference proteome</keyword>
<evidence type="ECO:0000255" key="1">
    <source>
        <dbReference type="HAMAP-Rule" id="MF_01095"/>
    </source>
</evidence>
<gene>
    <name type="ordered locus">TGAM_1777</name>
</gene>